<name>LIPB_RHOP5</name>
<evidence type="ECO:0000255" key="1">
    <source>
        <dbReference type="HAMAP-Rule" id="MF_00013"/>
    </source>
</evidence>
<evidence type="ECO:0000255" key="2">
    <source>
        <dbReference type="PROSITE-ProRule" id="PRU01067"/>
    </source>
</evidence>
<dbReference type="EC" id="2.3.1.181" evidence="1"/>
<dbReference type="EMBL" id="CP000463">
    <property type="protein sequence ID" value="ABJ07368.1"/>
    <property type="molecule type" value="Genomic_DNA"/>
</dbReference>
<dbReference type="SMR" id="Q07L16"/>
<dbReference type="STRING" id="316055.RPE_3436"/>
<dbReference type="KEGG" id="rpe:RPE_3436"/>
<dbReference type="eggNOG" id="COG0321">
    <property type="taxonomic scope" value="Bacteria"/>
</dbReference>
<dbReference type="HOGENOM" id="CLU_035168_3_0_5"/>
<dbReference type="OrthoDB" id="9787061at2"/>
<dbReference type="UniPathway" id="UPA00538">
    <property type="reaction ID" value="UER00592"/>
</dbReference>
<dbReference type="GO" id="GO:0005737">
    <property type="term" value="C:cytoplasm"/>
    <property type="evidence" value="ECO:0007669"/>
    <property type="project" value="UniProtKB-SubCell"/>
</dbReference>
<dbReference type="GO" id="GO:0033819">
    <property type="term" value="F:lipoyl(octanoyl) transferase activity"/>
    <property type="evidence" value="ECO:0007669"/>
    <property type="project" value="UniProtKB-EC"/>
</dbReference>
<dbReference type="GO" id="GO:0036211">
    <property type="term" value="P:protein modification process"/>
    <property type="evidence" value="ECO:0007669"/>
    <property type="project" value="InterPro"/>
</dbReference>
<dbReference type="CDD" id="cd16444">
    <property type="entry name" value="LipB"/>
    <property type="match status" value="1"/>
</dbReference>
<dbReference type="FunFam" id="3.30.930.10:FF:000159">
    <property type="entry name" value="Octanoyltransferase"/>
    <property type="match status" value="1"/>
</dbReference>
<dbReference type="Gene3D" id="3.30.930.10">
    <property type="entry name" value="Bira Bifunctional Protein, Domain 2"/>
    <property type="match status" value="1"/>
</dbReference>
<dbReference type="HAMAP" id="MF_00013">
    <property type="entry name" value="LipB"/>
    <property type="match status" value="1"/>
</dbReference>
<dbReference type="InterPro" id="IPR045864">
    <property type="entry name" value="aa-tRNA-synth_II/BPL/LPL"/>
</dbReference>
<dbReference type="InterPro" id="IPR004143">
    <property type="entry name" value="BPL_LPL_catalytic"/>
</dbReference>
<dbReference type="InterPro" id="IPR000544">
    <property type="entry name" value="Octanoyltransferase"/>
</dbReference>
<dbReference type="InterPro" id="IPR020605">
    <property type="entry name" value="Octanoyltransferase_CS"/>
</dbReference>
<dbReference type="NCBIfam" id="TIGR00214">
    <property type="entry name" value="lipB"/>
    <property type="match status" value="1"/>
</dbReference>
<dbReference type="NCBIfam" id="NF010921">
    <property type="entry name" value="PRK14341.1"/>
    <property type="match status" value="1"/>
</dbReference>
<dbReference type="NCBIfam" id="NF010925">
    <property type="entry name" value="PRK14345.1"/>
    <property type="match status" value="1"/>
</dbReference>
<dbReference type="PANTHER" id="PTHR10993:SF7">
    <property type="entry name" value="LIPOYLTRANSFERASE 2, MITOCHONDRIAL-RELATED"/>
    <property type="match status" value="1"/>
</dbReference>
<dbReference type="PANTHER" id="PTHR10993">
    <property type="entry name" value="OCTANOYLTRANSFERASE"/>
    <property type="match status" value="1"/>
</dbReference>
<dbReference type="Pfam" id="PF21948">
    <property type="entry name" value="LplA-B_cat"/>
    <property type="match status" value="1"/>
</dbReference>
<dbReference type="PIRSF" id="PIRSF016262">
    <property type="entry name" value="LPLase"/>
    <property type="match status" value="1"/>
</dbReference>
<dbReference type="SUPFAM" id="SSF55681">
    <property type="entry name" value="Class II aaRS and biotin synthetases"/>
    <property type="match status" value="1"/>
</dbReference>
<dbReference type="PROSITE" id="PS51733">
    <property type="entry name" value="BPL_LPL_CATALYTIC"/>
    <property type="match status" value="1"/>
</dbReference>
<dbReference type="PROSITE" id="PS01313">
    <property type="entry name" value="LIPB"/>
    <property type="match status" value="1"/>
</dbReference>
<organism>
    <name type="scientific">Rhodopseudomonas palustris (strain BisA53)</name>
    <dbReference type="NCBI Taxonomy" id="316055"/>
    <lineage>
        <taxon>Bacteria</taxon>
        <taxon>Pseudomonadati</taxon>
        <taxon>Pseudomonadota</taxon>
        <taxon>Alphaproteobacteria</taxon>
        <taxon>Hyphomicrobiales</taxon>
        <taxon>Nitrobacteraceae</taxon>
        <taxon>Rhodopseudomonas</taxon>
    </lineage>
</organism>
<keyword id="KW-0012">Acyltransferase</keyword>
<keyword id="KW-0963">Cytoplasm</keyword>
<keyword id="KW-0808">Transferase</keyword>
<sequence length="234" mass="25788">MINDRETIDLERLSLPHGAPAVVWQISDSPVAYPEAVAAMEVRAAAIAAGEAPELVWLLEHPPLYTSGTSAKPADLLDPRFPMYPTGRGGQITYHGPGQRVAYVMLDLKRRRPDVRAYVAGLEQWIIATLEHFNVKGERREDRVGVWVKRPDKGPGHEDKIAAIGVRLKRWVSFHGIAINVEPDLTHFSAIVPCGVSDPRYGVTSLVDLGLPVTMQDVDVALRAAFEQVFGPTR</sequence>
<gene>
    <name evidence="1" type="primary">lipB</name>
    <name type="ordered locus">RPE_3436</name>
</gene>
<feature type="chain" id="PRO_1000001119" description="Octanoyltransferase">
    <location>
        <begin position="1"/>
        <end position="234"/>
    </location>
</feature>
<feature type="domain" description="BPL/LPL catalytic" evidence="2">
    <location>
        <begin position="50"/>
        <end position="234"/>
    </location>
</feature>
<feature type="active site" description="Acyl-thioester intermediate" evidence="1">
    <location>
        <position position="194"/>
    </location>
</feature>
<feature type="binding site" evidence="1">
    <location>
        <begin position="88"/>
        <end position="95"/>
    </location>
    <ligand>
        <name>substrate</name>
    </ligand>
</feature>
<feature type="binding site" evidence="1">
    <location>
        <begin position="163"/>
        <end position="165"/>
    </location>
    <ligand>
        <name>substrate</name>
    </ligand>
</feature>
<feature type="binding site" evidence="1">
    <location>
        <begin position="176"/>
        <end position="178"/>
    </location>
    <ligand>
        <name>substrate</name>
    </ligand>
</feature>
<feature type="site" description="Lowers pKa of active site Cys" evidence="1">
    <location>
        <position position="160"/>
    </location>
</feature>
<comment type="function">
    <text evidence="1">Catalyzes the transfer of endogenously produced octanoic acid from octanoyl-acyl-carrier-protein onto the lipoyl domains of lipoate-dependent enzymes. Lipoyl-ACP can also act as a substrate although octanoyl-ACP is likely to be the physiological substrate.</text>
</comment>
<comment type="catalytic activity">
    <reaction evidence="1">
        <text>octanoyl-[ACP] + L-lysyl-[protein] = N(6)-octanoyl-L-lysyl-[protein] + holo-[ACP] + H(+)</text>
        <dbReference type="Rhea" id="RHEA:17665"/>
        <dbReference type="Rhea" id="RHEA-COMP:9636"/>
        <dbReference type="Rhea" id="RHEA-COMP:9685"/>
        <dbReference type="Rhea" id="RHEA-COMP:9752"/>
        <dbReference type="Rhea" id="RHEA-COMP:9928"/>
        <dbReference type="ChEBI" id="CHEBI:15378"/>
        <dbReference type="ChEBI" id="CHEBI:29969"/>
        <dbReference type="ChEBI" id="CHEBI:64479"/>
        <dbReference type="ChEBI" id="CHEBI:78463"/>
        <dbReference type="ChEBI" id="CHEBI:78809"/>
        <dbReference type="EC" id="2.3.1.181"/>
    </reaction>
</comment>
<comment type="pathway">
    <text evidence="1">Protein modification; protein lipoylation via endogenous pathway; protein N(6)-(lipoyl)lysine from octanoyl-[acyl-carrier-protein]: step 1/2.</text>
</comment>
<comment type="subcellular location">
    <subcellularLocation>
        <location evidence="1">Cytoplasm</location>
    </subcellularLocation>
</comment>
<comment type="miscellaneous">
    <text evidence="1">In the reaction, the free carboxyl group of octanoic acid is attached via an amide linkage to the epsilon-amino group of a specific lysine residue of lipoyl domains of lipoate-dependent enzymes.</text>
</comment>
<comment type="similarity">
    <text evidence="1">Belongs to the LipB family.</text>
</comment>
<proteinExistence type="inferred from homology"/>
<protein>
    <recommendedName>
        <fullName evidence="1">Octanoyltransferase</fullName>
        <ecNumber evidence="1">2.3.1.181</ecNumber>
    </recommendedName>
    <alternativeName>
        <fullName evidence="1">Lipoate-protein ligase B</fullName>
    </alternativeName>
    <alternativeName>
        <fullName evidence="1">Lipoyl/octanoyl transferase</fullName>
    </alternativeName>
    <alternativeName>
        <fullName evidence="1">Octanoyl-[acyl-carrier-protein]-protein N-octanoyltransferase</fullName>
    </alternativeName>
</protein>
<reference key="1">
    <citation type="submission" date="2006-09" db="EMBL/GenBank/DDBJ databases">
        <title>Complete sequence of Rhodopseudomonas palustris BisA53.</title>
        <authorList>
            <consortium name="US DOE Joint Genome Institute"/>
            <person name="Copeland A."/>
            <person name="Lucas S."/>
            <person name="Lapidus A."/>
            <person name="Barry K."/>
            <person name="Detter J.C."/>
            <person name="Glavina del Rio T."/>
            <person name="Hammon N."/>
            <person name="Israni S."/>
            <person name="Dalin E."/>
            <person name="Tice H."/>
            <person name="Pitluck S."/>
            <person name="Chain P."/>
            <person name="Malfatti S."/>
            <person name="Shin M."/>
            <person name="Vergez L."/>
            <person name="Schmutz J."/>
            <person name="Larimer F."/>
            <person name="Land M."/>
            <person name="Hauser L."/>
            <person name="Pelletier D.A."/>
            <person name="Kyrpides N."/>
            <person name="Kim E."/>
            <person name="Harwood C.S."/>
            <person name="Oda Y."/>
            <person name="Richardson P."/>
        </authorList>
    </citation>
    <scope>NUCLEOTIDE SEQUENCE [LARGE SCALE GENOMIC DNA]</scope>
    <source>
        <strain>BisA53</strain>
    </source>
</reference>
<accession>Q07L16</accession>